<organism>
    <name type="scientific">Moorella thermoacetica (strain ATCC 39073 / JCM 9320)</name>
    <dbReference type="NCBI Taxonomy" id="264732"/>
    <lineage>
        <taxon>Bacteria</taxon>
        <taxon>Bacillati</taxon>
        <taxon>Bacillota</taxon>
        <taxon>Clostridia</taxon>
        <taxon>Moorellales</taxon>
        <taxon>Moorellaceae</taxon>
        <taxon>Moorella</taxon>
    </lineage>
</organism>
<evidence type="ECO:0000255" key="1">
    <source>
        <dbReference type="HAMAP-Rule" id="MF_00156"/>
    </source>
</evidence>
<accession>Q2RM79</accession>
<proteinExistence type="inferred from homology"/>
<dbReference type="EC" id="2.1.2.11" evidence="1"/>
<dbReference type="EMBL" id="CP000232">
    <property type="protein sequence ID" value="ABC18460.1"/>
    <property type="molecule type" value="Genomic_DNA"/>
</dbReference>
<dbReference type="RefSeq" id="YP_429003.1">
    <property type="nucleotide sequence ID" value="NC_007644.1"/>
</dbReference>
<dbReference type="SMR" id="Q2RM79"/>
<dbReference type="STRING" id="264732.Moth_0121"/>
<dbReference type="EnsemblBacteria" id="ABC18460">
    <property type="protein sequence ID" value="ABC18460"/>
    <property type="gene ID" value="Moth_0121"/>
</dbReference>
<dbReference type="KEGG" id="mta:Moth_0121"/>
<dbReference type="PATRIC" id="fig|264732.11.peg.126"/>
<dbReference type="eggNOG" id="COG0413">
    <property type="taxonomic scope" value="Bacteria"/>
</dbReference>
<dbReference type="HOGENOM" id="CLU_036645_1_0_9"/>
<dbReference type="OrthoDB" id="9781789at2"/>
<dbReference type="UniPathway" id="UPA00028">
    <property type="reaction ID" value="UER00003"/>
</dbReference>
<dbReference type="GO" id="GO:0005737">
    <property type="term" value="C:cytoplasm"/>
    <property type="evidence" value="ECO:0007669"/>
    <property type="project" value="UniProtKB-SubCell"/>
</dbReference>
<dbReference type="GO" id="GO:0003864">
    <property type="term" value="F:3-methyl-2-oxobutanoate hydroxymethyltransferase activity"/>
    <property type="evidence" value="ECO:0007669"/>
    <property type="project" value="UniProtKB-UniRule"/>
</dbReference>
<dbReference type="GO" id="GO:0000287">
    <property type="term" value="F:magnesium ion binding"/>
    <property type="evidence" value="ECO:0007669"/>
    <property type="project" value="TreeGrafter"/>
</dbReference>
<dbReference type="GO" id="GO:0015940">
    <property type="term" value="P:pantothenate biosynthetic process"/>
    <property type="evidence" value="ECO:0007669"/>
    <property type="project" value="UniProtKB-UniRule"/>
</dbReference>
<dbReference type="CDD" id="cd06557">
    <property type="entry name" value="KPHMT-like"/>
    <property type="match status" value="1"/>
</dbReference>
<dbReference type="FunFam" id="3.20.20.60:FF:000003">
    <property type="entry name" value="3-methyl-2-oxobutanoate hydroxymethyltransferase"/>
    <property type="match status" value="1"/>
</dbReference>
<dbReference type="Gene3D" id="3.20.20.60">
    <property type="entry name" value="Phosphoenolpyruvate-binding domains"/>
    <property type="match status" value="1"/>
</dbReference>
<dbReference type="HAMAP" id="MF_00156">
    <property type="entry name" value="PanB"/>
    <property type="match status" value="1"/>
</dbReference>
<dbReference type="InterPro" id="IPR003700">
    <property type="entry name" value="Pantoate_hydroxy_MeTrfase"/>
</dbReference>
<dbReference type="InterPro" id="IPR015813">
    <property type="entry name" value="Pyrv/PenolPyrv_kinase-like_dom"/>
</dbReference>
<dbReference type="InterPro" id="IPR040442">
    <property type="entry name" value="Pyrv_kinase-like_dom_sf"/>
</dbReference>
<dbReference type="NCBIfam" id="TIGR00222">
    <property type="entry name" value="panB"/>
    <property type="match status" value="1"/>
</dbReference>
<dbReference type="NCBIfam" id="NF001452">
    <property type="entry name" value="PRK00311.1"/>
    <property type="match status" value="1"/>
</dbReference>
<dbReference type="PANTHER" id="PTHR20881">
    <property type="entry name" value="3-METHYL-2-OXOBUTANOATE HYDROXYMETHYLTRANSFERASE"/>
    <property type="match status" value="1"/>
</dbReference>
<dbReference type="PANTHER" id="PTHR20881:SF0">
    <property type="entry name" value="3-METHYL-2-OXOBUTANOATE HYDROXYMETHYLTRANSFERASE"/>
    <property type="match status" value="1"/>
</dbReference>
<dbReference type="Pfam" id="PF02548">
    <property type="entry name" value="Pantoate_transf"/>
    <property type="match status" value="1"/>
</dbReference>
<dbReference type="PIRSF" id="PIRSF000388">
    <property type="entry name" value="Pantoate_hydroxy_MeTrfase"/>
    <property type="match status" value="1"/>
</dbReference>
<dbReference type="SUPFAM" id="SSF51621">
    <property type="entry name" value="Phosphoenolpyruvate/pyruvate domain"/>
    <property type="match status" value="1"/>
</dbReference>
<feature type="chain" id="PRO_0000297298" description="3-methyl-2-oxobutanoate hydroxymethyltransferase">
    <location>
        <begin position="1"/>
        <end position="269"/>
    </location>
</feature>
<feature type="active site" description="Proton acceptor" evidence="1">
    <location>
        <position position="186"/>
    </location>
</feature>
<feature type="binding site" evidence="1">
    <location>
        <begin position="48"/>
        <end position="49"/>
    </location>
    <ligand>
        <name>3-methyl-2-oxobutanoate</name>
        <dbReference type="ChEBI" id="CHEBI:11851"/>
    </ligand>
</feature>
<feature type="binding site" evidence="1">
    <location>
        <position position="48"/>
    </location>
    <ligand>
        <name>Mg(2+)</name>
        <dbReference type="ChEBI" id="CHEBI:18420"/>
    </ligand>
</feature>
<feature type="binding site" evidence="1">
    <location>
        <position position="87"/>
    </location>
    <ligand>
        <name>3-methyl-2-oxobutanoate</name>
        <dbReference type="ChEBI" id="CHEBI:11851"/>
    </ligand>
</feature>
<feature type="binding site" evidence="1">
    <location>
        <position position="87"/>
    </location>
    <ligand>
        <name>Mg(2+)</name>
        <dbReference type="ChEBI" id="CHEBI:18420"/>
    </ligand>
</feature>
<feature type="binding site" evidence="1">
    <location>
        <position position="117"/>
    </location>
    <ligand>
        <name>3-methyl-2-oxobutanoate</name>
        <dbReference type="ChEBI" id="CHEBI:11851"/>
    </ligand>
</feature>
<feature type="binding site" evidence="1">
    <location>
        <position position="119"/>
    </location>
    <ligand>
        <name>Mg(2+)</name>
        <dbReference type="ChEBI" id="CHEBI:18420"/>
    </ligand>
</feature>
<reference key="1">
    <citation type="journal article" date="2008" name="Environ. Microbiol.">
        <title>The complete genome sequence of Moorella thermoacetica (f. Clostridium thermoaceticum).</title>
        <authorList>
            <person name="Pierce E."/>
            <person name="Xie G."/>
            <person name="Barabote R.D."/>
            <person name="Saunders E."/>
            <person name="Han C.S."/>
            <person name="Detter J.C."/>
            <person name="Richardson P."/>
            <person name="Brettin T.S."/>
            <person name="Das A."/>
            <person name="Ljungdahl L.G."/>
            <person name="Ragsdale S.W."/>
        </authorList>
    </citation>
    <scope>NUCLEOTIDE SEQUENCE [LARGE SCALE GENOMIC DNA]</scope>
    <source>
        <strain>ATCC 39073 / JCM 9320</strain>
    </source>
</reference>
<gene>
    <name evidence="1" type="primary">panB</name>
    <name type="ordered locus">Moth_0121</name>
</gene>
<name>PANB_MOOTA</name>
<keyword id="KW-0963">Cytoplasm</keyword>
<keyword id="KW-0460">Magnesium</keyword>
<keyword id="KW-0479">Metal-binding</keyword>
<keyword id="KW-0566">Pantothenate biosynthesis</keyword>
<keyword id="KW-0808">Transferase</keyword>
<sequence length="269" mass="28700">MAQRSRVTLPQLQAMKERGERITMVTAYDYPSSLLADRAGMDMILVGDSLGMVVLGYSSTVPVTMDEMIHHTKAVVRANPAALVVADLPFLSYQTSVPDAVYNAGRLIKEGGADAVKLEGGQAVVPTVRAIVNAGIPVMGHLGLTPQSAVQLGGFRVQGRSEAEGEKIAADAAALVEAGVFALVLECVPADLARRITAALPVPTIGIGAGPDCDGQVLVYHDLLGLFDRFRPKFVKQYANLAEATVAALEKYRDEVRQGKFPDQEHSFK</sequence>
<comment type="function">
    <text evidence="1">Catalyzes the reversible reaction in which hydroxymethyl group from 5,10-methylenetetrahydrofolate is transferred onto alpha-ketoisovalerate to form ketopantoate.</text>
</comment>
<comment type="catalytic activity">
    <reaction evidence="1">
        <text>3-methyl-2-oxobutanoate + (6R)-5,10-methylene-5,6,7,8-tetrahydrofolate + H2O = 2-dehydropantoate + (6S)-5,6,7,8-tetrahydrofolate</text>
        <dbReference type="Rhea" id="RHEA:11824"/>
        <dbReference type="ChEBI" id="CHEBI:11561"/>
        <dbReference type="ChEBI" id="CHEBI:11851"/>
        <dbReference type="ChEBI" id="CHEBI:15377"/>
        <dbReference type="ChEBI" id="CHEBI:15636"/>
        <dbReference type="ChEBI" id="CHEBI:57453"/>
        <dbReference type="EC" id="2.1.2.11"/>
    </reaction>
</comment>
<comment type="cofactor">
    <cofactor evidence="1">
        <name>Mg(2+)</name>
        <dbReference type="ChEBI" id="CHEBI:18420"/>
    </cofactor>
    <text evidence="1">Binds 1 Mg(2+) ion per subunit.</text>
</comment>
<comment type="pathway">
    <text evidence="1">Cofactor biosynthesis; (R)-pantothenate biosynthesis; (R)-pantoate from 3-methyl-2-oxobutanoate: step 1/2.</text>
</comment>
<comment type="subunit">
    <text evidence="1">Homodecamer; pentamer of dimers.</text>
</comment>
<comment type="subcellular location">
    <subcellularLocation>
        <location evidence="1">Cytoplasm</location>
    </subcellularLocation>
</comment>
<comment type="similarity">
    <text evidence="1">Belongs to the PanB family.</text>
</comment>
<protein>
    <recommendedName>
        <fullName evidence="1">3-methyl-2-oxobutanoate hydroxymethyltransferase</fullName>
        <ecNumber evidence="1">2.1.2.11</ecNumber>
    </recommendedName>
    <alternativeName>
        <fullName evidence="1">Ketopantoate hydroxymethyltransferase</fullName>
        <shortName evidence="1">KPHMT</shortName>
    </alternativeName>
</protein>